<gene>
    <name evidence="6" type="primary">Nif3l1</name>
</gene>
<proteinExistence type="evidence at protein level"/>
<dbReference type="EMBL" id="BC097992">
    <property type="protein sequence ID" value="AAH97992.1"/>
    <property type="molecule type" value="mRNA"/>
</dbReference>
<dbReference type="RefSeq" id="NP_001380617.1">
    <property type="nucleotide sequence ID" value="NM_001393688.1"/>
</dbReference>
<dbReference type="RefSeq" id="XP_006245023.1">
    <property type="nucleotide sequence ID" value="XM_006244961.3"/>
</dbReference>
<dbReference type="RefSeq" id="XP_006245024.1">
    <property type="nucleotide sequence ID" value="XM_006244962.5"/>
</dbReference>
<dbReference type="RefSeq" id="XP_038939235.1">
    <property type="nucleotide sequence ID" value="XM_039083307.2"/>
</dbReference>
<dbReference type="SMR" id="Q4V7D6"/>
<dbReference type="FunCoup" id="Q4V7D6">
    <property type="interactions" value="2626"/>
</dbReference>
<dbReference type="STRING" id="10116.ENSRNOP00000018014"/>
<dbReference type="iPTMnet" id="Q4V7D6"/>
<dbReference type="PhosphoSitePlus" id="Q4V7D6"/>
<dbReference type="jPOST" id="Q4V7D6"/>
<dbReference type="PaxDb" id="10116-ENSRNOP00000018014"/>
<dbReference type="GeneID" id="301431"/>
<dbReference type="UCSC" id="RGD:1310329">
    <property type="organism name" value="rat"/>
</dbReference>
<dbReference type="AGR" id="RGD:1310329"/>
<dbReference type="CTD" id="60491"/>
<dbReference type="RGD" id="1310329">
    <property type="gene designation" value="Nif3l1"/>
</dbReference>
<dbReference type="VEuPathDB" id="HostDB:ENSRNOG00000013446"/>
<dbReference type="eggNOG" id="KOG4131">
    <property type="taxonomic scope" value="Eukaryota"/>
</dbReference>
<dbReference type="HOGENOM" id="CLU_037423_0_0_1"/>
<dbReference type="InParanoid" id="Q4V7D6"/>
<dbReference type="OrthoDB" id="3345469at2759"/>
<dbReference type="PhylomeDB" id="Q4V7D6"/>
<dbReference type="TreeFam" id="TF324125"/>
<dbReference type="PRO" id="PR:Q4V7D6"/>
<dbReference type="Proteomes" id="UP000002494">
    <property type="component" value="Chromosome 9"/>
</dbReference>
<dbReference type="Bgee" id="ENSRNOG00000013446">
    <property type="expression patterns" value="Expressed in pancreas and 19 other cell types or tissues"/>
</dbReference>
<dbReference type="ExpressionAtlas" id="Q4V7D6">
    <property type="expression patterns" value="baseline and differential"/>
</dbReference>
<dbReference type="GO" id="GO:0005737">
    <property type="term" value="C:cytoplasm"/>
    <property type="evidence" value="ECO:0000250"/>
    <property type="project" value="UniProtKB"/>
</dbReference>
<dbReference type="GO" id="GO:0005739">
    <property type="term" value="C:mitochondrion"/>
    <property type="evidence" value="ECO:0000318"/>
    <property type="project" value="GO_Central"/>
</dbReference>
<dbReference type="GO" id="GO:0005634">
    <property type="term" value="C:nucleus"/>
    <property type="evidence" value="ECO:0000250"/>
    <property type="project" value="UniProtKB"/>
</dbReference>
<dbReference type="GO" id="GO:0042802">
    <property type="term" value="F:identical protein binding"/>
    <property type="evidence" value="ECO:0000266"/>
    <property type="project" value="RGD"/>
</dbReference>
<dbReference type="GO" id="GO:0061629">
    <property type="term" value="F:RNA polymerase II-specific DNA-binding transcription factor binding"/>
    <property type="evidence" value="ECO:0000266"/>
    <property type="project" value="RGD"/>
</dbReference>
<dbReference type="GO" id="GO:0000122">
    <property type="term" value="P:negative regulation of transcription by RNA polymerase II"/>
    <property type="evidence" value="ECO:0000250"/>
    <property type="project" value="UniProtKB"/>
</dbReference>
<dbReference type="GO" id="GO:0030182">
    <property type="term" value="P:neuron differentiation"/>
    <property type="evidence" value="ECO:0000250"/>
    <property type="project" value="UniProtKB"/>
</dbReference>
<dbReference type="GO" id="GO:0045893">
    <property type="term" value="P:positive regulation of DNA-templated transcription"/>
    <property type="evidence" value="ECO:0000266"/>
    <property type="project" value="RGD"/>
</dbReference>
<dbReference type="FunFam" id="3.40.1390.30:FF:000001">
    <property type="entry name" value="GTP cyclohydrolase 1 type 2"/>
    <property type="match status" value="1"/>
</dbReference>
<dbReference type="FunFam" id="3.40.1390.30:FF:000004">
    <property type="entry name" value="NIF3-like protein 1"/>
    <property type="match status" value="1"/>
</dbReference>
<dbReference type="Gene3D" id="3.40.1390.30">
    <property type="entry name" value="NIF3 (NGG1p interacting factor 3)-like"/>
    <property type="match status" value="2"/>
</dbReference>
<dbReference type="InterPro" id="IPR002678">
    <property type="entry name" value="DUF34/NIF3"/>
</dbReference>
<dbReference type="InterPro" id="IPR017222">
    <property type="entry name" value="DUF34/NIF3_animal"/>
</dbReference>
<dbReference type="InterPro" id="IPR036069">
    <property type="entry name" value="DUF34/NIF3_sf"/>
</dbReference>
<dbReference type="NCBIfam" id="TIGR00486">
    <property type="entry name" value="YbgI_SA1388"/>
    <property type="match status" value="1"/>
</dbReference>
<dbReference type="PANTHER" id="PTHR13799">
    <property type="entry name" value="NGG1 INTERACTING FACTOR 3"/>
    <property type="match status" value="1"/>
</dbReference>
<dbReference type="PANTHER" id="PTHR13799:SF13">
    <property type="entry name" value="NIF3-LIKE PROTEIN 1"/>
    <property type="match status" value="1"/>
</dbReference>
<dbReference type="Pfam" id="PF01784">
    <property type="entry name" value="DUF34_NIF3"/>
    <property type="match status" value="1"/>
</dbReference>
<dbReference type="PIRSF" id="PIRSF037490">
    <property type="entry name" value="UCP037490_NIF3_euk"/>
    <property type="match status" value="1"/>
</dbReference>
<dbReference type="SUPFAM" id="SSF102705">
    <property type="entry name" value="NIF3 (NGG1p interacting factor 3)-like"/>
    <property type="match status" value="1"/>
</dbReference>
<name>NIF3L_RAT</name>
<sequence length="376" mass="41519">MLSSAHVVPTSVRRAPSWICSSSRSFMDLKALLSSLNDFASLSFAESWDNVGLLVEPSPPHTVNTLFLTNDLTEEVMEEALQKKADLILSYHPPIFRPMKHITWKTWKERLVIRALENRVAIYSPHTAYDAAPQGVNSWLAKGLGTCTTRPIHPSKAPNYPTEGTHRLEFSANHSQDLDKVMSAVKGVGGVSVTSFPARCDGEEQTRVSLNCTQKALMQVLAFLSQDRQLYQKTEILSLEKPLLLHTGMGRLCTLDESVSLATMIERIKRHLKLPHLRLALGVGRTLESPVKVVALCAGSGGSVLQGVEADLYLTGEMSHHDVLDAASKGINVILCEHSNTERGFLSDLQEMLGVHLENKINIILSETDRDPLRVV</sequence>
<comment type="function">
    <text evidence="1">May function as a transcriptional corepressor through its interaction with COPS2, negatively regulating the expression of genes involved in neuronal differentiation.</text>
</comment>
<comment type="subunit">
    <text evidence="2 3">Homodimer (By similarity). Interacts with COPS2 (PubMed:12522100). Interacts with THOC7 (By similarity).</text>
</comment>
<comment type="subcellular location">
    <subcellularLocation>
        <location evidence="1">Cytoplasm</location>
    </subcellularLocation>
    <subcellularLocation>
        <location evidence="1">Nucleus</location>
    </subcellularLocation>
    <text evidence="1">Interaction with COPS2 may regulate localization to the nucleus.</text>
</comment>
<comment type="similarity">
    <text evidence="4">Belongs to the GTP cyclohydrolase I type 2/NIF3 family.</text>
</comment>
<evidence type="ECO:0000250" key="1">
    <source>
        <dbReference type="UniProtKB" id="Q9EQ80"/>
    </source>
</evidence>
<evidence type="ECO:0000250" key="2">
    <source>
        <dbReference type="UniProtKB" id="Q9GZT8"/>
    </source>
</evidence>
<evidence type="ECO:0000269" key="3">
    <source>
    </source>
</evidence>
<evidence type="ECO:0000305" key="4"/>
<evidence type="ECO:0000305" key="5">
    <source>
    </source>
</evidence>
<evidence type="ECO:0000312" key="6">
    <source>
        <dbReference type="RGD" id="1310329"/>
    </source>
</evidence>
<accession>Q4V7D6</accession>
<protein>
    <recommendedName>
        <fullName evidence="5">NIF3-like protein 1</fullName>
    </recommendedName>
</protein>
<keyword id="KW-0007">Acetylation</keyword>
<keyword id="KW-0963">Cytoplasm</keyword>
<keyword id="KW-0539">Nucleus</keyword>
<keyword id="KW-0597">Phosphoprotein</keyword>
<keyword id="KW-1185">Reference proteome</keyword>
<reference key="1">
    <citation type="journal article" date="2004" name="Genome Res.">
        <title>The status, quality, and expansion of the NIH full-length cDNA project: the Mammalian Gene Collection (MGC).</title>
        <authorList>
            <consortium name="The MGC Project Team"/>
        </authorList>
    </citation>
    <scope>NUCLEOTIDE SEQUENCE [LARGE SCALE MRNA]</scope>
    <source>
        <tissue>Placenta</tissue>
    </source>
</reference>
<reference key="2">
    <citation type="journal article" date="2003" name="J. Biol. Chem.">
        <title>The role of transcriptional corepressor Nif3l1 in early stage of neural differentiation via cooperation with Trip15/CSN2.</title>
        <authorList>
            <person name="Akiyama H."/>
            <person name="Fujisawa N."/>
            <person name="Tashiro Y."/>
            <person name="Takanabe N."/>
            <person name="Sugiyama A."/>
            <person name="Tashiro F."/>
        </authorList>
    </citation>
    <scope>INTERACTION WITH COPS2</scope>
</reference>
<feature type="chain" id="PRO_0000330909" description="NIF3-like protein 1">
    <location>
        <begin position="1"/>
        <end position="376"/>
    </location>
</feature>
<feature type="region of interest" description="Mediates interaction with COPS2" evidence="1">
    <location>
        <begin position="243"/>
        <end position="376"/>
    </location>
</feature>
<feature type="modified residue" description="N6-acetyllysine" evidence="2">
    <location>
        <position position="108"/>
    </location>
</feature>
<feature type="modified residue" description="Phosphothreonine" evidence="1">
    <location>
        <position position="254"/>
    </location>
</feature>
<feature type="modified residue" description="Phosphoserine" evidence="1">
    <location>
        <position position="258"/>
    </location>
</feature>
<organism>
    <name type="scientific">Rattus norvegicus</name>
    <name type="common">Rat</name>
    <dbReference type="NCBI Taxonomy" id="10116"/>
    <lineage>
        <taxon>Eukaryota</taxon>
        <taxon>Metazoa</taxon>
        <taxon>Chordata</taxon>
        <taxon>Craniata</taxon>
        <taxon>Vertebrata</taxon>
        <taxon>Euteleostomi</taxon>
        <taxon>Mammalia</taxon>
        <taxon>Eutheria</taxon>
        <taxon>Euarchontoglires</taxon>
        <taxon>Glires</taxon>
        <taxon>Rodentia</taxon>
        <taxon>Myomorpha</taxon>
        <taxon>Muroidea</taxon>
        <taxon>Muridae</taxon>
        <taxon>Murinae</taxon>
        <taxon>Rattus</taxon>
    </lineage>
</organism>